<gene>
    <name type="primary">hob3</name>
    <name type="ORF">SPBC725.09c</name>
</gene>
<feature type="chain" id="PRO_0000192959" description="Protein hob3">
    <location>
        <begin position="1"/>
        <end position="264"/>
    </location>
</feature>
<feature type="domain" description="BAR" evidence="2">
    <location>
        <begin position="17"/>
        <end position="237"/>
    </location>
</feature>
<feature type="coiled-coil region" evidence="1">
    <location>
        <begin position="25"/>
        <end position="65"/>
    </location>
</feature>
<feature type="coiled-coil region" evidence="1">
    <location>
        <begin position="165"/>
        <end position="187"/>
    </location>
</feature>
<feature type="sequence conflict" description="In Ref. 2; BAA13861." evidence="4" ref="2">
    <original>Q</original>
    <variation>L</variation>
    <location>
        <position position="93"/>
    </location>
</feature>
<feature type="sequence conflict" description="In Ref. 2; BAA13861." evidence="4" ref="2">
    <original>E</original>
    <variation>K</variation>
    <location>
        <position position="96"/>
    </location>
</feature>
<proteinExistence type="evidence at protein level"/>
<evidence type="ECO:0000255" key="1"/>
<evidence type="ECO:0000255" key="2">
    <source>
        <dbReference type="PROSITE-ProRule" id="PRU00361"/>
    </source>
</evidence>
<evidence type="ECO:0000269" key="3">
    <source>
    </source>
</evidence>
<evidence type="ECO:0000305" key="4"/>
<protein>
    <recommendedName>
        <fullName>Protein hob3</fullName>
    </recommendedName>
    <alternativeName>
        <fullName>Homolog of Bin3</fullName>
    </alternativeName>
</protein>
<name>HOB3_SCHPO</name>
<keyword id="KW-0131">Cell cycle</keyword>
<keyword id="KW-0132">Cell division</keyword>
<keyword id="KW-0175">Coiled coil</keyword>
<keyword id="KW-0963">Cytoplasm</keyword>
<keyword id="KW-0206">Cytoskeleton</keyword>
<keyword id="KW-1185">Reference proteome</keyword>
<keyword id="KW-0717">Septation</keyword>
<reference key="1">
    <citation type="journal article" date="2001" name="J. Biol. Chem.">
        <title>Human BIN3 complements the F-actin localization defects caused by loss of Hob3p, the fission yeast homolog of Rvs161p.</title>
        <authorList>
            <person name="Routhier E.L."/>
            <person name="Burn T.C."/>
            <person name="Abbaszade I."/>
            <person name="Summers M."/>
            <person name="Albright C.F."/>
            <person name="Prendergast G.C."/>
        </authorList>
    </citation>
    <scope>NUCLEOTIDE SEQUENCE [MRNA]</scope>
    <scope>FUNCTION</scope>
</reference>
<reference key="2">
    <citation type="journal article" date="1997" name="DNA Res.">
        <title>Identification of open reading frames in Schizosaccharomyces pombe cDNAs.</title>
        <authorList>
            <person name="Yoshioka S."/>
            <person name="Kato K."/>
            <person name="Nakai K."/>
            <person name="Okayama H."/>
            <person name="Nojima H."/>
        </authorList>
    </citation>
    <scope>NUCLEOTIDE SEQUENCE [LARGE SCALE MRNA]</scope>
    <source>
        <strain>PR745</strain>
    </source>
</reference>
<reference key="3">
    <citation type="journal article" date="2002" name="Nature">
        <title>The genome sequence of Schizosaccharomyces pombe.</title>
        <authorList>
            <person name="Wood V."/>
            <person name="Gwilliam R."/>
            <person name="Rajandream M.A."/>
            <person name="Lyne M.H."/>
            <person name="Lyne R."/>
            <person name="Stewart A."/>
            <person name="Sgouros J.G."/>
            <person name="Peat N."/>
            <person name="Hayles J."/>
            <person name="Baker S.G."/>
            <person name="Basham D."/>
            <person name="Bowman S."/>
            <person name="Brooks K."/>
            <person name="Brown D."/>
            <person name="Brown S."/>
            <person name="Chillingworth T."/>
            <person name="Churcher C.M."/>
            <person name="Collins M."/>
            <person name="Connor R."/>
            <person name="Cronin A."/>
            <person name="Davis P."/>
            <person name="Feltwell T."/>
            <person name="Fraser A."/>
            <person name="Gentles S."/>
            <person name="Goble A."/>
            <person name="Hamlin N."/>
            <person name="Harris D.E."/>
            <person name="Hidalgo J."/>
            <person name="Hodgson G."/>
            <person name="Holroyd S."/>
            <person name="Hornsby T."/>
            <person name="Howarth S."/>
            <person name="Huckle E.J."/>
            <person name="Hunt S."/>
            <person name="Jagels K."/>
            <person name="James K.D."/>
            <person name="Jones L."/>
            <person name="Jones M."/>
            <person name="Leather S."/>
            <person name="McDonald S."/>
            <person name="McLean J."/>
            <person name="Mooney P."/>
            <person name="Moule S."/>
            <person name="Mungall K.L."/>
            <person name="Murphy L.D."/>
            <person name="Niblett D."/>
            <person name="Odell C."/>
            <person name="Oliver K."/>
            <person name="O'Neil S."/>
            <person name="Pearson D."/>
            <person name="Quail M.A."/>
            <person name="Rabbinowitsch E."/>
            <person name="Rutherford K.M."/>
            <person name="Rutter S."/>
            <person name="Saunders D."/>
            <person name="Seeger K."/>
            <person name="Sharp S."/>
            <person name="Skelton J."/>
            <person name="Simmonds M.N."/>
            <person name="Squares R."/>
            <person name="Squares S."/>
            <person name="Stevens K."/>
            <person name="Taylor K."/>
            <person name="Taylor R.G."/>
            <person name="Tivey A."/>
            <person name="Walsh S.V."/>
            <person name="Warren T."/>
            <person name="Whitehead S."/>
            <person name="Woodward J.R."/>
            <person name="Volckaert G."/>
            <person name="Aert R."/>
            <person name="Robben J."/>
            <person name="Grymonprez B."/>
            <person name="Weltjens I."/>
            <person name="Vanstreels E."/>
            <person name="Rieger M."/>
            <person name="Schaefer M."/>
            <person name="Mueller-Auer S."/>
            <person name="Gabel C."/>
            <person name="Fuchs M."/>
            <person name="Duesterhoeft A."/>
            <person name="Fritzc C."/>
            <person name="Holzer E."/>
            <person name="Moestl D."/>
            <person name="Hilbert H."/>
            <person name="Borzym K."/>
            <person name="Langer I."/>
            <person name="Beck A."/>
            <person name="Lehrach H."/>
            <person name="Reinhardt R."/>
            <person name="Pohl T.M."/>
            <person name="Eger P."/>
            <person name="Zimmermann W."/>
            <person name="Wedler H."/>
            <person name="Wambutt R."/>
            <person name="Purnelle B."/>
            <person name="Goffeau A."/>
            <person name="Cadieu E."/>
            <person name="Dreano S."/>
            <person name="Gloux S."/>
            <person name="Lelaure V."/>
            <person name="Mottier S."/>
            <person name="Galibert F."/>
            <person name="Aves S.J."/>
            <person name="Xiang Z."/>
            <person name="Hunt C."/>
            <person name="Moore K."/>
            <person name="Hurst S.M."/>
            <person name="Lucas M."/>
            <person name="Rochet M."/>
            <person name="Gaillardin C."/>
            <person name="Tallada V.A."/>
            <person name="Garzon A."/>
            <person name="Thode G."/>
            <person name="Daga R.R."/>
            <person name="Cruzado L."/>
            <person name="Jimenez J."/>
            <person name="Sanchez M."/>
            <person name="del Rey F."/>
            <person name="Benito J."/>
            <person name="Dominguez A."/>
            <person name="Revuelta J.L."/>
            <person name="Moreno S."/>
            <person name="Armstrong J."/>
            <person name="Forsburg S.L."/>
            <person name="Cerutti L."/>
            <person name="Lowe T."/>
            <person name="McCombie W.R."/>
            <person name="Paulsen I."/>
            <person name="Potashkin J."/>
            <person name="Shpakovski G.V."/>
            <person name="Ussery D."/>
            <person name="Barrell B.G."/>
            <person name="Nurse P."/>
        </authorList>
    </citation>
    <scope>NUCLEOTIDE SEQUENCE [LARGE SCALE GENOMIC DNA]</scope>
    <source>
        <strain>972 / ATCC 24843</strain>
    </source>
</reference>
<organism>
    <name type="scientific">Schizosaccharomyces pombe (strain 972 / ATCC 24843)</name>
    <name type="common">Fission yeast</name>
    <dbReference type="NCBI Taxonomy" id="284812"/>
    <lineage>
        <taxon>Eukaryota</taxon>
        <taxon>Fungi</taxon>
        <taxon>Dikarya</taxon>
        <taxon>Ascomycota</taxon>
        <taxon>Taphrinomycotina</taxon>
        <taxon>Schizosaccharomycetes</taxon>
        <taxon>Schizosaccharomycetales</taxon>
        <taxon>Schizosaccharomycetaceae</taxon>
        <taxon>Schizosaccharomyces</taxon>
    </lineage>
</organism>
<dbReference type="EMBL" id="AF275638">
    <property type="protein sequence ID" value="AAF86459.1"/>
    <property type="molecule type" value="mRNA"/>
</dbReference>
<dbReference type="EMBL" id="D89200">
    <property type="protein sequence ID" value="BAA13861.1"/>
    <property type="status" value="ALT_INIT"/>
    <property type="molecule type" value="mRNA"/>
</dbReference>
<dbReference type="EMBL" id="CU329671">
    <property type="protein sequence ID" value="CAA22181.1"/>
    <property type="molecule type" value="Genomic_DNA"/>
</dbReference>
<dbReference type="PIR" id="T40661">
    <property type="entry name" value="T40661"/>
</dbReference>
<dbReference type="PIR" id="T43000">
    <property type="entry name" value="T43000"/>
</dbReference>
<dbReference type="RefSeq" id="NP_595489.1">
    <property type="nucleotide sequence ID" value="NM_001021400.2"/>
</dbReference>
<dbReference type="SMR" id="Q9UUM7"/>
<dbReference type="BioGRID" id="277675">
    <property type="interactions" value="77"/>
</dbReference>
<dbReference type="FunCoup" id="Q9UUM7">
    <property type="interactions" value="85"/>
</dbReference>
<dbReference type="IntAct" id="Q9UUM7">
    <property type="interactions" value="2"/>
</dbReference>
<dbReference type="MINT" id="Q9UUM7"/>
<dbReference type="STRING" id="284812.Q9UUM7"/>
<dbReference type="iPTMnet" id="Q9UUM7"/>
<dbReference type="PaxDb" id="4896-SPBC725.09c.1"/>
<dbReference type="EnsemblFungi" id="SPBC725.09c.1">
    <property type="protein sequence ID" value="SPBC725.09c.1:pep"/>
    <property type="gene ID" value="SPBC725.09c"/>
</dbReference>
<dbReference type="GeneID" id="2541160"/>
<dbReference type="KEGG" id="spo:2541160"/>
<dbReference type="PomBase" id="SPBC725.09c">
    <property type="gene designation" value="hob3"/>
</dbReference>
<dbReference type="VEuPathDB" id="FungiDB:SPBC725.09c"/>
<dbReference type="eggNOG" id="KOG3771">
    <property type="taxonomic scope" value="Eukaryota"/>
</dbReference>
<dbReference type="HOGENOM" id="CLU_072096_0_0_1"/>
<dbReference type="InParanoid" id="Q9UUM7"/>
<dbReference type="OMA" id="TRFCAYF"/>
<dbReference type="PhylomeDB" id="Q9UUM7"/>
<dbReference type="PRO" id="PR:Q9UUM7"/>
<dbReference type="Proteomes" id="UP000002485">
    <property type="component" value="Chromosome II"/>
</dbReference>
<dbReference type="GO" id="GO:0030479">
    <property type="term" value="C:actin cortical patch"/>
    <property type="evidence" value="ECO:0000318"/>
    <property type="project" value="GO_Central"/>
</dbReference>
<dbReference type="GO" id="GO:0015629">
    <property type="term" value="C:actin cytoskeleton"/>
    <property type="evidence" value="ECO:0000318"/>
    <property type="project" value="GO_Central"/>
</dbReference>
<dbReference type="GO" id="GO:0051285">
    <property type="term" value="C:cell cortex of cell tip"/>
    <property type="evidence" value="ECO:0000314"/>
    <property type="project" value="PomBase"/>
</dbReference>
<dbReference type="GO" id="GO:0043332">
    <property type="term" value="C:mating projection tip"/>
    <property type="evidence" value="ECO:0000318"/>
    <property type="project" value="GO_Central"/>
</dbReference>
<dbReference type="GO" id="GO:0031097">
    <property type="term" value="C:medial cortex"/>
    <property type="evidence" value="ECO:0000314"/>
    <property type="project" value="PomBase"/>
</dbReference>
<dbReference type="GO" id="GO:1990528">
    <property type="term" value="C:Rvs161p-Rvs167p complex"/>
    <property type="evidence" value="ECO:0000318"/>
    <property type="project" value="GO_Central"/>
</dbReference>
<dbReference type="GO" id="GO:0106006">
    <property type="term" value="F:cytoskeletal protein-membrane anchor activity"/>
    <property type="evidence" value="ECO:0000255"/>
    <property type="project" value="PomBase"/>
</dbReference>
<dbReference type="GO" id="GO:0051666">
    <property type="term" value="P:actin cortical patch localization"/>
    <property type="evidence" value="ECO:0000318"/>
    <property type="project" value="GO_Central"/>
</dbReference>
<dbReference type="GO" id="GO:0030036">
    <property type="term" value="P:actin cytoskeleton organization"/>
    <property type="evidence" value="ECO:0000315"/>
    <property type="project" value="PomBase"/>
</dbReference>
<dbReference type="GO" id="GO:0007015">
    <property type="term" value="P:actin filament organization"/>
    <property type="evidence" value="ECO:0007669"/>
    <property type="project" value="InterPro"/>
</dbReference>
<dbReference type="GO" id="GO:0000917">
    <property type="term" value="P:division septum assembly"/>
    <property type="evidence" value="ECO:0007669"/>
    <property type="project" value="UniProtKB-KW"/>
</dbReference>
<dbReference type="GO" id="GO:0006897">
    <property type="term" value="P:endocytosis"/>
    <property type="evidence" value="ECO:0000318"/>
    <property type="project" value="GO_Central"/>
</dbReference>
<dbReference type="GO" id="GO:1903475">
    <property type="term" value="P:mitotic actomyosin contractile ring assembly"/>
    <property type="evidence" value="ECO:0000315"/>
    <property type="project" value="PomBase"/>
</dbReference>
<dbReference type="GO" id="GO:0097320">
    <property type="term" value="P:plasma membrane tubulation"/>
    <property type="evidence" value="ECO:0000318"/>
    <property type="project" value="GO_Central"/>
</dbReference>
<dbReference type="CDD" id="cd07591">
    <property type="entry name" value="BAR_Rvs161p"/>
    <property type="match status" value="1"/>
</dbReference>
<dbReference type="FunFam" id="1.20.1270.60:FF:000014">
    <property type="entry name" value="Protein hob3, variant"/>
    <property type="match status" value="1"/>
</dbReference>
<dbReference type="Gene3D" id="1.20.1270.60">
    <property type="entry name" value="Arfaptin homology (AH) domain/BAR domain"/>
    <property type="match status" value="1"/>
</dbReference>
<dbReference type="InterPro" id="IPR027267">
    <property type="entry name" value="AH/BAR_dom_sf"/>
</dbReference>
<dbReference type="InterPro" id="IPR004148">
    <property type="entry name" value="BAR_dom"/>
</dbReference>
<dbReference type="InterPro" id="IPR046982">
    <property type="entry name" value="BIN3/RVS161-like"/>
</dbReference>
<dbReference type="InterPro" id="IPR037429">
    <property type="entry name" value="Rvs161/Hob3_BAR"/>
</dbReference>
<dbReference type="PANTHER" id="PTHR47174">
    <property type="entry name" value="BRIDGING INTEGRATOR 3"/>
    <property type="match status" value="1"/>
</dbReference>
<dbReference type="PANTHER" id="PTHR47174:SF3">
    <property type="entry name" value="BRIDGING INTEGRATOR 3"/>
    <property type="match status" value="1"/>
</dbReference>
<dbReference type="Pfam" id="PF03114">
    <property type="entry name" value="BAR"/>
    <property type="match status" value="1"/>
</dbReference>
<dbReference type="PRINTS" id="PR01251">
    <property type="entry name" value="AMPHIPHYSIN"/>
</dbReference>
<dbReference type="SMART" id="SM00721">
    <property type="entry name" value="BAR"/>
    <property type="match status" value="1"/>
</dbReference>
<dbReference type="SUPFAM" id="SSF103657">
    <property type="entry name" value="BAR/IMD domain-like"/>
    <property type="match status" value="1"/>
</dbReference>
<dbReference type="PROSITE" id="PS51021">
    <property type="entry name" value="BAR"/>
    <property type="match status" value="1"/>
</dbReference>
<accession>Q9UUM7</accession>
<accession>P78850</accession>
<sequence>MSWHGFKKAVNRAGTSVMMKTGHVERTVDREFETEERRYRTMESAAKKLQKEAKGYLDALRAMTASQTRIANTIDAFYGDAGSKDGVSAYYRQVVEDLDADTVKELDGPFRTTVLDPISRFCSYFPDINAAITKRNHKLLDHDAMRAKVQKLVDKPSNDTTKLPRTEKEAAMAKEVYETLNNQLVSELPQLIALRVPYLDPSFEALVKIQLRFCREGYEKMAQVQQYFDNSVREDYSNGLLDDKVEQVLQSMRDLSIAGLNNSQ</sequence>
<comment type="function">
    <text evidence="3">Involved in cytokinesis and septation where it has a role in the localization of F-actin.</text>
</comment>
<comment type="interaction">
    <interactant intactId="EBI-1556284">
        <id>Q9UUM7</id>
    </interactant>
    <interactant intactId="EBI-767502">
        <id>Q01112</id>
        <label>cdc42</label>
    </interactant>
    <organismsDiffer>false</organismsDiffer>
    <experiments>2</experiments>
</comment>
<comment type="interaction">
    <interactant intactId="EBI-1556284">
        <id>Q9UUM7</id>
    </interactant>
    <interactant intactId="EBI-1556299">
        <id>Q09763</id>
        <label>gef1</label>
    </interactant>
    <organismsDiffer>false</organismsDiffer>
    <experiments>5</experiments>
</comment>
<comment type="subcellular location">
    <subcellularLocation>
        <location>Cytoplasm</location>
        <location>Cytoskeleton</location>
    </subcellularLocation>
</comment>
<comment type="sequence caution" evidence="4">
    <conflict type="erroneous initiation">
        <sequence resource="EMBL-CDS" id="BAA13861"/>
    </conflict>
</comment>